<dbReference type="EC" id="4.2.1.11"/>
<dbReference type="EMBL" id="U10297">
    <property type="protein sequence ID" value="AAA57450.1"/>
    <property type="molecule type" value="mRNA"/>
</dbReference>
<dbReference type="PIR" id="A53665">
    <property type="entry name" value="A53665"/>
</dbReference>
<dbReference type="DrugBank" id="DB12245">
    <property type="generic name" value="Triclabendazole"/>
</dbReference>
<dbReference type="BRENDA" id="4.2.1.11">
    <property type="organism ID" value="2230"/>
</dbReference>
<dbReference type="UniPathway" id="UPA00109">
    <property type="reaction ID" value="UER00187"/>
</dbReference>
<dbReference type="GO" id="GO:0000015">
    <property type="term" value="C:phosphopyruvate hydratase complex"/>
    <property type="evidence" value="ECO:0007669"/>
    <property type="project" value="InterPro"/>
</dbReference>
<dbReference type="GO" id="GO:0000287">
    <property type="term" value="F:magnesium ion binding"/>
    <property type="evidence" value="ECO:0007669"/>
    <property type="project" value="InterPro"/>
</dbReference>
<dbReference type="GO" id="GO:0004634">
    <property type="term" value="F:phosphopyruvate hydratase activity"/>
    <property type="evidence" value="ECO:0007669"/>
    <property type="project" value="UniProtKB-EC"/>
</dbReference>
<dbReference type="GO" id="GO:0006096">
    <property type="term" value="P:glycolytic process"/>
    <property type="evidence" value="ECO:0007669"/>
    <property type="project" value="UniProtKB-UniPathway"/>
</dbReference>
<dbReference type="CDD" id="cd03313">
    <property type="entry name" value="enolase"/>
    <property type="match status" value="1"/>
</dbReference>
<dbReference type="FunFam" id="3.30.390.10:FF:000001">
    <property type="entry name" value="Enolase"/>
    <property type="match status" value="1"/>
</dbReference>
<dbReference type="FunFam" id="3.20.20.120:FF:000002">
    <property type="entry name" value="Enolase 1"/>
    <property type="match status" value="1"/>
</dbReference>
<dbReference type="Gene3D" id="3.20.20.120">
    <property type="entry name" value="Enolase-like C-terminal domain"/>
    <property type="match status" value="1"/>
</dbReference>
<dbReference type="Gene3D" id="3.30.390.10">
    <property type="entry name" value="Enolase-like, N-terminal domain"/>
    <property type="match status" value="1"/>
</dbReference>
<dbReference type="HAMAP" id="MF_00318">
    <property type="entry name" value="Enolase"/>
    <property type="match status" value="1"/>
</dbReference>
<dbReference type="InterPro" id="IPR000941">
    <property type="entry name" value="Enolase"/>
</dbReference>
<dbReference type="InterPro" id="IPR036849">
    <property type="entry name" value="Enolase-like_C_sf"/>
</dbReference>
<dbReference type="InterPro" id="IPR029017">
    <property type="entry name" value="Enolase-like_N"/>
</dbReference>
<dbReference type="InterPro" id="IPR020810">
    <property type="entry name" value="Enolase_C"/>
</dbReference>
<dbReference type="InterPro" id="IPR020809">
    <property type="entry name" value="Enolase_CS"/>
</dbReference>
<dbReference type="InterPro" id="IPR020811">
    <property type="entry name" value="Enolase_N"/>
</dbReference>
<dbReference type="NCBIfam" id="TIGR01060">
    <property type="entry name" value="eno"/>
    <property type="match status" value="1"/>
</dbReference>
<dbReference type="PANTHER" id="PTHR11902">
    <property type="entry name" value="ENOLASE"/>
    <property type="match status" value="1"/>
</dbReference>
<dbReference type="PANTHER" id="PTHR11902:SF1">
    <property type="entry name" value="ENOLASE"/>
    <property type="match status" value="1"/>
</dbReference>
<dbReference type="Pfam" id="PF00113">
    <property type="entry name" value="Enolase_C"/>
    <property type="match status" value="1"/>
</dbReference>
<dbReference type="Pfam" id="PF03952">
    <property type="entry name" value="Enolase_N"/>
    <property type="match status" value="1"/>
</dbReference>
<dbReference type="PIRSF" id="PIRSF001400">
    <property type="entry name" value="Enolase"/>
    <property type="match status" value="1"/>
</dbReference>
<dbReference type="PRINTS" id="PR00148">
    <property type="entry name" value="ENOLASE"/>
</dbReference>
<dbReference type="SFLD" id="SFLDF00002">
    <property type="entry name" value="enolase"/>
    <property type="match status" value="1"/>
</dbReference>
<dbReference type="SFLD" id="SFLDG00178">
    <property type="entry name" value="enolase"/>
    <property type="match status" value="1"/>
</dbReference>
<dbReference type="SMART" id="SM01192">
    <property type="entry name" value="Enolase_C"/>
    <property type="match status" value="1"/>
</dbReference>
<dbReference type="SMART" id="SM01193">
    <property type="entry name" value="Enolase_N"/>
    <property type="match status" value="1"/>
</dbReference>
<dbReference type="SUPFAM" id="SSF51604">
    <property type="entry name" value="Enolase C-terminal domain-like"/>
    <property type="match status" value="1"/>
</dbReference>
<dbReference type="SUPFAM" id="SSF54826">
    <property type="entry name" value="Enolase N-terminal domain-like"/>
    <property type="match status" value="1"/>
</dbReference>
<dbReference type="PROSITE" id="PS00164">
    <property type="entry name" value="ENOLASE"/>
    <property type="match status" value="1"/>
</dbReference>
<name>ENO_FASHE</name>
<sequence>MAIKAIHARQIFDSRGNPTVEVDVTTAKGLFRAAVPSGASTGVHEALELRDGPPGYMGKGVLKAVANVNSQIAPNLIKSGINVTDQAAVDKFMLDLDGTPNKEKLGANAILGVSLAXCKAGAAEKGLPLYKYIATLAGNKEVIMPVPSFNVINGGSHAGNKLAMQEFMIMPTGASSFTEAMKIGSEVYHNLRAVIKSKYGLDACNVGDEGGFAPSIQDNLEGLELLRTAIDKAGYTGKVXIAMDCAASEFYKEGKYDLDFKNPKSQASSWITSDAMADVYKKMMSTYPIVSIEDPFDQDDWPAWTKLTGECKIQIVGDDLTVTNPLRVQKAIDQKACNCLLLKVNQIGSVSESIKACKMAQEAGWGVMVSHRSGETEDNFIADLVVGLRTGQIKTGAPCRSERLAKYNQLLRIEEDLGGAAKYAGENFRRP</sequence>
<feature type="chain" id="PRO_0000134082" description="Enolase">
    <location>
        <begin position="1"/>
        <end position="431"/>
    </location>
</feature>
<feature type="active site" description="Proton donor" evidence="1">
    <location>
        <position position="209"/>
    </location>
</feature>
<feature type="active site" description="Proton acceptor" evidence="1">
    <location>
        <position position="343"/>
    </location>
</feature>
<feature type="binding site" evidence="1">
    <location>
        <position position="157"/>
    </location>
    <ligand>
        <name>substrate</name>
    </ligand>
</feature>
<feature type="binding site" evidence="1">
    <location>
        <position position="166"/>
    </location>
    <ligand>
        <name>substrate</name>
    </ligand>
</feature>
<feature type="binding site" evidence="1">
    <location>
        <position position="244"/>
    </location>
    <ligand>
        <name>Mg(2+)</name>
        <dbReference type="ChEBI" id="CHEBI:18420"/>
    </ligand>
</feature>
<feature type="binding site" evidence="1">
    <location>
        <position position="293"/>
    </location>
    <ligand>
        <name>Mg(2+)</name>
        <dbReference type="ChEBI" id="CHEBI:18420"/>
    </ligand>
</feature>
<feature type="binding site" evidence="1">
    <location>
        <position position="293"/>
    </location>
    <ligand>
        <name>substrate</name>
    </ligand>
</feature>
<feature type="binding site" evidence="1">
    <location>
        <position position="318"/>
    </location>
    <ligand>
        <name>Mg(2+)</name>
        <dbReference type="ChEBI" id="CHEBI:18420"/>
    </ligand>
</feature>
<feature type="binding site" evidence="1">
    <location>
        <position position="318"/>
    </location>
    <ligand>
        <name>substrate</name>
    </ligand>
</feature>
<feature type="binding site" evidence="1">
    <location>
        <begin position="370"/>
        <end position="373"/>
    </location>
    <ligand>
        <name>substrate</name>
    </ligand>
</feature>
<feature type="binding site" evidence="1">
    <location>
        <position position="394"/>
    </location>
    <ligand>
        <name>substrate</name>
    </ligand>
</feature>
<organism>
    <name type="scientific">Fasciola hepatica</name>
    <name type="common">Liver fluke</name>
    <dbReference type="NCBI Taxonomy" id="6192"/>
    <lineage>
        <taxon>Eukaryota</taxon>
        <taxon>Metazoa</taxon>
        <taxon>Spiralia</taxon>
        <taxon>Lophotrochozoa</taxon>
        <taxon>Platyhelminthes</taxon>
        <taxon>Trematoda</taxon>
        <taxon>Digenea</taxon>
        <taxon>Plagiorchiida</taxon>
        <taxon>Echinostomata</taxon>
        <taxon>Echinostomatoidea</taxon>
        <taxon>Fasciolidae</taxon>
        <taxon>Fasciola</taxon>
    </lineage>
</organism>
<reference key="1">
    <citation type="journal article" date="1994" name="J. Biol. Chem.">
        <title>RNA trans-splicing in Fasciola hepatica. Identification of a spliced leader (SL) RNA and SL sequences on mRNAs.</title>
        <authorList>
            <person name="Davis R.E."/>
            <person name="Singh H."/>
            <person name="Botka C."/>
            <person name="Hardwick C."/>
            <person name="el Meanawy M."/>
            <person name="Villanueva J."/>
        </authorList>
    </citation>
    <scope>NUCLEOTIDE SEQUENCE [MRNA]</scope>
</reference>
<proteinExistence type="evidence at transcript level"/>
<protein>
    <recommendedName>
        <fullName>Enolase</fullName>
        <ecNumber>4.2.1.11</ecNumber>
    </recommendedName>
    <alternativeName>
        <fullName>2-phospho-D-glycerate hydro-lyase</fullName>
    </alternativeName>
    <alternativeName>
        <fullName>2-phosphoglycerate dehydratase</fullName>
    </alternativeName>
</protein>
<keyword id="KW-0963">Cytoplasm</keyword>
<keyword id="KW-0324">Glycolysis</keyword>
<keyword id="KW-0456">Lyase</keyword>
<keyword id="KW-0460">Magnesium</keyword>
<keyword id="KW-0479">Metal-binding</keyword>
<comment type="catalytic activity">
    <reaction>
        <text>(2R)-2-phosphoglycerate = phosphoenolpyruvate + H2O</text>
        <dbReference type="Rhea" id="RHEA:10164"/>
        <dbReference type="ChEBI" id="CHEBI:15377"/>
        <dbReference type="ChEBI" id="CHEBI:58289"/>
        <dbReference type="ChEBI" id="CHEBI:58702"/>
        <dbReference type="EC" id="4.2.1.11"/>
    </reaction>
</comment>
<comment type="cofactor">
    <cofactor>
        <name>Mg(2+)</name>
        <dbReference type="ChEBI" id="CHEBI:18420"/>
    </cofactor>
    <text>Mg(2+) is required for catalysis and for stabilizing the dimer.</text>
</comment>
<comment type="pathway">
    <text>Carbohydrate degradation; glycolysis; pyruvate from D-glyceraldehyde 3-phosphate: step 4/5.</text>
</comment>
<comment type="subunit">
    <text evidence="1">Homodimer.</text>
</comment>
<comment type="subcellular location">
    <subcellularLocation>
        <location>Cytoplasm</location>
    </subcellularLocation>
</comment>
<comment type="similarity">
    <text evidence="2">Belongs to the enolase family.</text>
</comment>
<evidence type="ECO:0000250" key="1"/>
<evidence type="ECO:0000305" key="2"/>
<gene>
    <name type="primary">ENO</name>
</gene>
<accession>Q27655</accession>